<sequence>MTYCKRGTEGLIYLEDGTLLRGCGFGAKGVRYGEVVFTTAMNGYPESMTDPSYRGQILIITHPLVGNYGVPNPIVRNGILQNFESEQIQIEGLVVTEETDPSKWNSSKSLHQWMAEQGIPGVSSVDTRLLVKKVRTLGSMMGVIASGEHVEDPRKYIEMRYDEIDFTKFTSPKSPIIHQNNSPDIIVLVDCGIKHGILEELYKTGFTIVRVPCKSSADEIMNYSPKGIVFGNGPGNPNILKDLVKNFSAVMEYKLPTLGICLGHQVATLALGGNVRKMKFGHRAINKPVTDISNNKCYISTHNHGYGVYKEDIPPDTQIWFVNPDDGVVEGLIHKRLPLITTQFHPEARPGPNDTTWVFQKFKKMVIKDEGN</sequence>
<gene>
    <name evidence="1" type="primary">carA</name>
    <name type="ordered locus">Msed_1989</name>
</gene>
<protein>
    <recommendedName>
        <fullName evidence="1">Carbamoyl phosphate synthase small chain</fullName>
        <ecNumber evidence="1">6.3.5.5</ecNumber>
    </recommendedName>
    <alternativeName>
        <fullName evidence="1">Carbamoyl phosphate synthetase glutamine chain</fullName>
    </alternativeName>
</protein>
<feature type="chain" id="PRO_1000138871" description="Carbamoyl phosphate synthase small chain">
    <location>
        <begin position="1"/>
        <end position="372"/>
    </location>
</feature>
<feature type="domain" description="Glutamine amidotransferase type-1" evidence="1">
    <location>
        <begin position="185"/>
        <end position="372"/>
    </location>
</feature>
<feature type="region of interest" description="CPSase" evidence="1">
    <location>
        <begin position="1"/>
        <end position="186"/>
    </location>
</feature>
<feature type="active site" description="Nucleophile" evidence="1">
    <location>
        <position position="261"/>
    </location>
</feature>
<feature type="active site" evidence="1">
    <location>
        <position position="345"/>
    </location>
</feature>
<feature type="active site" evidence="1">
    <location>
        <position position="347"/>
    </location>
</feature>
<feature type="binding site" evidence="1">
    <location>
        <position position="52"/>
    </location>
    <ligand>
        <name>L-glutamine</name>
        <dbReference type="ChEBI" id="CHEBI:58359"/>
    </ligand>
</feature>
<feature type="binding site" evidence="1">
    <location>
        <position position="233"/>
    </location>
    <ligand>
        <name>L-glutamine</name>
        <dbReference type="ChEBI" id="CHEBI:58359"/>
    </ligand>
</feature>
<feature type="binding site" evidence="1">
    <location>
        <position position="235"/>
    </location>
    <ligand>
        <name>L-glutamine</name>
        <dbReference type="ChEBI" id="CHEBI:58359"/>
    </ligand>
</feature>
<feature type="binding site" evidence="1">
    <location>
        <position position="262"/>
    </location>
    <ligand>
        <name>L-glutamine</name>
        <dbReference type="ChEBI" id="CHEBI:58359"/>
    </ligand>
</feature>
<feature type="binding site" evidence="1">
    <location>
        <position position="265"/>
    </location>
    <ligand>
        <name>L-glutamine</name>
        <dbReference type="ChEBI" id="CHEBI:58359"/>
    </ligand>
</feature>
<feature type="binding site" evidence="1">
    <location>
        <position position="303"/>
    </location>
    <ligand>
        <name>L-glutamine</name>
        <dbReference type="ChEBI" id="CHEBI:58359"/>
    </ligand>
</feature>
<feature type="binding site" evidence="1">
    <location>
        <position position="305"/>
    </location>
    <ligand>
        <name>L-glutamine</name>
        <dbReference type="ChEBI" id="CHEBI:58359"/>
    </ligand>
</feature>
<feature type="binding site" evidence="1">
    <location>
        <position position="306"/>
    </location>
    <ligand>
        <name>L-glutamine</name>
        <dbReference type="ChEBI" id="CHEBI:58359"/>
    </ligand>
</feature>
<organism>
    <name type="scientific">Metallosphaera sedula (strain ATCC 51363 / DSM 5348 / JCM 9185 / NBRC 15509 / TH2)</name>
    <dbReference type="NCBI Taxonomy" id="399549"/>
    <lineage>
        <taxon>Archaea</taxon>
        <taxon>Thermoproteota</taxon>
        <taxon>Thermoprotei</taxon>
        <taxon>Sulfolobales</taxon>
        <taxon>Sulfolobaceae</taxon>
        <taxon>Metallosphaera</taxon>
    </lineage>
</organism>
<accession>A4YI77</accession>
<reference key="1">
    <citation type="journal article" date="2008" name="Appl. Environ. Microbiol.">
        <title>The genome sequence of the metal-mobilizing, extremely thermoacidophilic archaeon Metallosphaera sedula provides insights into bioleaching-associated metabolism.</title>
        <authorList>
            <person name="Auernik K.S."/>
            <person name="Maezato Y."/>
            <person name="Blum P.H."/>
            <person name="Kelly R.M."/>
        </authorList>
    </citation>
    <scope>NUCLEOTIDE SEQUENCE [LARGE SCALE GENOMIC DNA]</scope>
    <source>
        <strain>ATCC 51363 / DSM 5348 / JCM 9185 / NBRC 15509 / TH2</strain>
    </source>
</reference>
<comment type="function">
    <text evidence="1">Small subunit of the glutamine-dependent carbamoyl phosphate synthetase (CPSase). CPSase catalyzes the formation of carbamoyl phosphate from the ammonia moiety of glutamine, carbonate, and phosphate donated by ATP, constituting the first step of 2 biosynthetic pathways, one leading to arginine and/or urea and the other to pyrimidine nucleotides. The small subunit (glutamine amidotransferase) binds and cleaves glutamine to supply the large subunit with the substrate ammonia.</text>
</comment>
<comment type="catalytic activity">
    <reaction evidence="1">
        <text>hydrogencarbonate + L-glutamine + 2 ATP + H2O = carbamoyl phosphate + L-glutamate + 2 ADP + phosphate + 2 H(+)</text>
        <dbReference type="Rhea" id="RHEA:18633"/>
        <dbReference type="ChEBI" id="CHEBI:15377"/>
        <dbReference type="ChEBI" id="CHEBI:15378"/>
        <dbReference type="ChEBI" id="CHEBI:17544"/>
        <dbReference type="ChEBI" id="CHEBI:29985"/>
        <dbReference type="ChEBI" id="CHEBI:30616"/>
        <dbReference type="ChEBI" id="CHEBI:43474"/>
        <dbReference type="ChEBI" id="CHEBI:58228"/>
        <dbReference type="ChEBI" id="CHEBI:58359"/>
        <dbReference type="ChEBI" id="CHEBI:456216"/>
        <dbReference type="EC" id="6.3.5.5"/>
    </reaction>
</comment>
<comment type="catalytic activity">
    <molecule>Carbamoyl phosphate synthase small chain</molecule>
    <reaction evidence="1">
        <text>L-glutamine + H2O = L-glutamate + NH4(+)</text>
        <dbReference type="Rhea" id="RHEA:15889"/>
        <dbReference type="ChEBI" id="CHEBI:15377"/>
        <dbReference type="ChEBI" id="CHEBI:28938"/>
        <dbReference type="ChEBI" id="CHEBI:29985"/>
        <dbReference type="ChEBI" id="CHEBI:58359"/>
    </reaction>
</comment>
<comment type="pathway">
    <text evidence="1">Amino-acid biosynthesis; L-arginine biosynthesis; carbamoyl phosphate from bicarbonate: step 1/1.</text>
</comment>
<comment type="pathway">
    <text evidence="1">Pyrimidine metabolism; UMP biosynthesis via de novo pathway; (S)-dihydroorotate from bicarbonate: step 1/3.</text>
</comment>
<comment type="subunit">
    <text evidence="1">Composed of two chains; the small (or glutamine) chain promotes the hydrolysis of glutamine to ammonia, which is used by the large (or ammonia) chain to synthesize carbamoyl phosphate. Tetramer of heterodimers (alpha,beta)4.</text>
</comment>
<comment type="similarity">
    <text evidence="1">Belongs to the CarA family.</text>
</comment>
<keyword id="KW-0028">Amino-acid biosynthesis</keyword>
<keyword id="KW-0055">Arginine biosynthesis</keyword>
<keyword id="KW-0067">ATP-binding</keyword>
<keyword id="KW-0315">Glutamine amidotransferase</keyword>
<keyword id="KW-0436">Ligase</keyword>
<keyword id="KW-0547">Nucleotide-binding</keyword>
<keyword id="KW-0665">Pyrimidine biosynthesis</keyword>
<keyword id="KW-1185">Reference proteome</keyword>
<proteinExistence type="inferred from homology"/>
<dbReference type="EC" id="6.3.5.5" evidence="1"/>
<dbReference type="EMBL" id="CP000682">
    <property type="protein sequence ID" value="ABP96129.1"/>
    <property type="molecule type" value="Genomic_DNA"/>
</dbReference>
<dbReference type="RefSeq" id="WP_012021916.1">
    <property type="nucleotide sequence ID" value="NZ_CP139956.1"/>
</dbReference>
<dbReference type="SMR" id="A4YI77"/>
<dbReference type="STRING" id="399549.Msed_1989"/>
<dbReference type="GeneID" id="97612904"/>
<dbReference type="KEGG" id="mse:Msed_1989"/>
<dbReference type="eggNOG" id="arCOG00064">
    <property type="taxonomic scope" value="Archaea"/>
</dbReference>
<dbReference type="HOGENOM" id="CLU_035901_2_1_2"/>
<dbReference type="UniPathway" id="UPA00068">
    <property type="reaction ID" value="UER00171"/>
</dbReference>
<dbReference type="UniPathway" id="UPA00070">
    <property type="reaction ID" value="UER00115"/>
</dbReference>
<dbReference type="Proteomes" id="UP000000242">
    <property type="component" value="Chromosome"/>
</dbReference>
<dbReference type="GO" id="GO:0005524">
    <property type="term" value="F:ATP binding"/>
    <property type="evidence" value="ECO:0007669"/>
    <property type="project" value="UniProtKB-UniRule"/>
</dbReference>
<dbReference type="GO" id="GO:0004088">
    <property type="term" value="F:carbamoyl-phosphate synthase (glutamine-hydrolyzing) activity"/>
    <property type="evidence" value="ECO:0007669"/>
    <property type="project" value="UniProtKB-UniRule"/>
</dbReference>
<dbReference type="GO" id="GO:0004359">
    <property type="term" value="F:glutaminase activity"/>
    <property type="evidence" value="ECO:0007669"/>
    <property type="project" value="RHEA"/>
</dbReference>
<dbReference type="GO" id="GO:0006207">
    <property type="term" value="P:'de novo' pyrimidine nucleobase biosynthetic process"/>
    <property type="evidence" value="ECO:0007669"/>
    <property type="project" value="InterPro"/>
</dbReference>
<dbReference type="GO" id="GO:0044205">
    <property type="term" value="P:'de novo' UMP biosynthetic process"/>
    <property type="evidence" value="ECO:0007669"/>
    <property type="project" value="UniProtKB-UniRule"/>
</dbReference>
<dbReference type="GO" id="GO:0006541">
    <property type="term" value="P:glutamine metabolic process"/>
    <property type="evidence" value="ECO:0007669"/>
    <property type="project" value="InterPro"/>
</dbReference>
<dbReference type="GO" id="GO:0006526">
    <property type="term" value="P:L-arginine biosynthetic process"/>
    <property type="evidence" value="ECO:0007669"/>
    <property type="project" value="UniProtKB-UniRule"/>
</dbReference>
<dbReference type="CDD" id="cd01744">
    <property type="entry name" value="GATase1_CPSase"/>
    <property type="match status" value="1"/>
</dbReference>
<dbReference type="Gene3D" id="3.40.50.880">
    <property type="match status" value="1"/>
</dbReference>
<dbReference type="Gene3D" id="3.50.30.20">
    <property type="entry name" value="Carbamoyl-phosphate synthase small subunit, N-terminal domain"/>
    <property type="match status" value="1"/>
</dbReference>
<dbReference type="HAMAP" id="MF_01209">
    <property type="entry name" value="CPSase_S_chain"/>
    <property type="match status" value="1"/>
</dbReference>
<dbReference type="InterPro" id="IPR050472">
    <property type="entry name" value="Anth_synth/Amidotransfase"/>
</dbReference>
<dbReference type="InterPro" id="IPR006274">
    <property type="entry name" value="CarbamoylP_synth_ssu"/>
</dbReference>
<dbReference type="InterPro" id="IPR002474">
    <property type="entry name" value="CarbamoylP_synth_ssu_N"/>
</dbReference>
<dbReference type="InterPro" id="IPR036480">
    <property type="entry name" value="CarbP_synth_ssu_N_sf"/>
</dbReference>
<dbReference type="InterPro" id="IPR029062">
    <property type="entry name" value="Class_I_gatase-like"/>
</dbReference>
<dbReference type="InterPro" id="IPR035686">
    <property type="entry name" value="CPSase_GATase1"/>
</dbReference>
<dbReference type="InterPro" id="IPR017926">
    <property type="entry name" value="GATASE"/>
</dbReference>
<dbReference type="NCBIfam" id="TIGR01368">
    <property type="entry name" value="CPSaseIIsmall"/>
    <property type="match status" value="1"/>
</dbReference>
<dbReference type="NCBIfam" id="NF009475">
    <property type="entry name" value="PRK12838.1"/>
    <property type="match status" value="1"/>
</dbReference>
<dbReference type="PANTHER" id="PTHR43418:SF7">
    <property type="entry name" value="CARBAMOYL-PHOSPHATE SYNTHASE SMALL CHAIN"/>
    <property type="match status" value="1"/>
</dbReference>
<dbReference type="PANTHER" id="PTHR43418">
    <property type="entry name" value="MULTIFUNCTIONAL TRYPTOPHAN BIOSYNTHESIS PROTEIN-RELATED"/>
    <property type="match status" value="1"/>
</dbReference>
<dbReference type="Pfam" id="PF00988">
    <property type="entry name" value="CPSase_sm_chain"/>
    <property type="match status" value="1"/>
</dbReference>
<dbReference type="Pfam" id="PF00117">
    <property type="entry name" value="GATase"/>
    <property type="match status" value="1"/>
</dbReference>
<dbReference type="PRINTS" id="PR00097">
    <property type="entry name" value="ANTSNTHASEII"/>
</dbReference>
<dbReference type="PRINTS" id="PR00099">
    <property type="entry name" value="CPSGATASE"/>
</dbReference>
<dbReference type="PRINTS" id="PR00096">
    <property type="entry name" value="GATASE"/>
</dbReference>
<dbReference type="SMART" id="SM01097">
    <property type="entry name" value="CPSase_sm_chain"/>
    <property type="match status" value="1"/>
</dbReference>
<dbReference type="SUPFAM" id="SSF52021">
    <property type="entry name" value="Carbamoyl phosphate synthetase, small subunit N-terminal domain"/>
    <property type="match status" value="1"/>
</dbReference>
<dbReference type="SUPFAM" id="SSF52317">
    <property type="entry name" value="Class I glutamine amidotransferase-like"/>
    <property type="match status" value="1"/>
</dbReference>
<dbReference type="PROSITE" id="PS51273">
    <property type="entry name" value="GATASE_TYPE_1"/>
    <property type="match status" value="1"/>
</dbReference>
<name>CARA_METS5</name>
<evidence type="ECO:0000255" key="1">
    <source>
        <dbReference type="HAMAP-Rule" id="MF_01209"/>
    </source>
</evidence>